<name>RL9_BACMK</name>
<accession>A9VTK5</accession>
<keyword id="KW-0687">Ribonucleoprotein</keyword>
<keyword id="KW-0689">Ribosomal protein</keyword>
<keyword id="KW-0694">RNA-binding</keyword>
<keyword id="KW-0699">rRNA-binding</keyword>
<sequence length="148" mass="16397">MKVIFLKDVKGKGKKGEIKNVPDGYANNFLLKQGLAAEATNSSMKTLDAQKRKEEKDAAAEVENAKELKETLEKLTVEVKAKSGEGGRLFGSITSKQIVDVMQKSHKIKLDKRKFEMDDAIRALGYTNVNVKLHPQVTATVKVHVSEQ</sequence>
<gene>
    <name evidence="1" type="primary">rplI</name>
    <name type="ordered locus">BcerKBAB4_5262</name>
</gene>
<comment type="function">
    <text evidence="1">Binds to the 23S rRNA.</text>
</comment>
<comment type="similarity">
    <text evidence="1">Belongs to the bacterial ribosomal protein bL9 family.</text>
</comment>
<reference key="1">
    <citation type="journal article" date="2008" name="Chem. Biol. Interact.">
        <title>Extending the Bacillus cereus group genomics to putative food-borne pathogens of different toxicity.</title>
        <authorList>
            <person name="Lapidus A."/>
            <person name="Goltsman E."/>
            <person name="Auger S."/>
            <person name="Galleron N."/>
            <person name="Segurens B."/>
            <person name="Dossat C."/>
            <person name="Land M.L."/>
            <person name="Broussolle V."/>
            <person name="Brillard J."/>
            <person name="Guinebretiere M.-H."/>
            <person name="Sanchis V."/>
            <person name="Nguen-the C."/>
            <person name="Lereclus D."/>
            <person name="Richardson P."/>
            <person name="Wincker P."/>
            <person name="Weissenbach J."/>
            <person name="Ehrlich S.D."/>
            <person name="Sorokin A."/>
        </authorList>
    </citation>
    <scope>NUCLEOTIDE SEQUENCE [LARGE SCALE GENOMIC DNA]</scope>
    <source>
        <strain>KBAB4</strain>
    </source>
</reference>
<dbReference type="EMBL" id="CP000903">
    <property type="protein sequence ID" value="ABY46405.1"/>
    <property type="molecule type" value="Genomic_DNA"/>
</dbReference>
<dbReference type="RefSeq" id="WP_002130186.1">
    <property type="nucleotide sequence ID" value="NC_010184.1"/>
</dbReference>
<dbReference type="SMR" id="A9VTK5"/>
<dbReference type="GeneID" id="66264974"/>
<dbReference type="KEGG" id="bwe:BcerKBAB4_5262"/>
<dbReference type="eggNOG" id="COG0359">
    <property type="taxonomic scope" value="Bacteria"/>
</dbReference>
<dbReference type="HOGENOM" id="CLU_078938_3_2_9"/>
<dbReference type="Proteomes" id="UP000002154">
    <property type="component" value="Chromosome"/>
</dbReference>
<dbReference type="GO" id="GO:1990904">
    <property type="term" value="C:ribonucleoprotein complex"/>
    <property type="evidence" value="ECO:0007669"/>
    <property type="project" value="UniProtKB-KW"/>
</dbReference>
<dbReference type="GO" id="GO:0005840">
    <property type="term" value="C:ribosome"/>
    <property type="evidence" value="ECO:0007669"/>
    <property type="project" value="UniProtKB-KW"/>
</dbReference>
<dbReference type="GO" id="GO:0019843">
    <property type="term" value="F:rRNA binding"/>
    <property type="evidence" value="ECO:0007669"/>
    <property type="project" value="UniProtKB-UniRule"/>
</dbReference>
<dbReference type="GO" id="GO:0003735">
    <property type="term" value="F:structural constituent of ribosome"/>
    <property type="evidence" value="ECO:0007669"/>
    <property type="project" value="InterPro"/>
</dbReference>
<dbReference type="GO" id="GO:0006412">
    <property type="term" value="P:translation"/>
    <property type="evidence" value="ECO:0007669"/>
    <property type="project" value="UniProtKB-UniRule"/>
</dbReference>
<dbReference type="FunFam" id="3.10.430.100:FF:000002">
    <property type="entry name" value="50S ribosomal protein L9"/>
    <property type="match status" value="1"/>
</dbReference>
<dbReference type="FunFam" id="3.40.5.10:FF:000002">
    <property type="entry name" value="50S ribosomal protein L9"/>
    <property type="match status" value="1"/>
</dbReference>
<dbReference type="Gene3D" id="3.10.430.100">
    <property type="entry name" value="Ribosomal protein L9, C-terminal domain"/>
    <property type="match status" value="1"/>
</dbReference>
<dbReference type="Gene3D" id="3.40.5.10">
    <property type="entry name" value="Ribosomal protein L9, N-terminal domain"/>
    <property type="match status" value="1"/>
</dbReference>
<dbReference type="HAMAP" id="MF_00503">
    <property type="entry name" value="Ribosomal_bL9"/>
    <property type="match status" value="1"/>
</dbReference>
<dbReference type="InterPro" id="IPR000244">
    <property type="entry name" value="Ribosomal_bL9"/>
</dbReference>
<dbReference type="InterPro" id="IPR009027">
    <property type="entry name" value="Ribosomal_bL9/RNase_H1_N"/>
</dbReference>
<dbReference type="InterPro" id="IPR020594">
    <property type="entry name" value="Ribosomal_bL9_bac/chp"/>
</dbReference>
<dbReference type="InterPro" id="IPR020069">
    <property type="entry name" value="Ribosomal_bL9_C"/>
</dbReference>
<dbReference type="InterPro" id="IPR036791">
    <property type="entry name" value="Ribosomal_bL9_C_sf"/>
</dbReference>
<dbReference type="InterPro" id="IPR020070">
    <property type="entry name" value="Ribosomal_bL9_N"/>
</dbReference>
<dbReference type="InterPro" id="IPR036935">
    <property type="entry name" value="Ribosomal_bL9_N_sf"/>
</dbReference>
<dbReference type="NCBIfam" id="TIGR00158">
    <property type="entry name" value="L9"/>
    <property type="match status" value="1"/>
</dbReference>
<dbReference type="PANTHER" id="PTHR21368">
    <property type="entry name" value="50S RIBOSOMAL PROTEIN L9"/>
    <property type="match status" value="1"/>
</dbReference>
<dbReference type="Pfam" id="PF03948">
    <property type="entry name" value="Ribosomal_L9_C"/>
    <property type="match status" value="1"/>
</dbReference>
<dbReference type="Pfam" id="PF01281">
    <property type="entry name" value="Ribosomal_L9_N"/>
    <property type="match status" value="1"/>
</dbReference>
<dbReference type="SUPFAM" id="SSF55658">
    <property type="entry name" value="L9 N-domain-like"/>
    <property type="match status" value="1"/>
</dbReference>
<dbReference type="SUPFAM" id="SSF55653">
    <property type="entry name" value="Ribosomal protein L9 C-domain"/>
    <property type="match status" value="1"/>
</dbReference>
<dbReference type="PROSITE" id="PS00651">
    <property type="entry name" value="RIBOSOMAL_L9"/>
    <property type="match status" value="1"/>
</dbReference>
<evidence type="ECO:0000255" key="1">
    <source>
        <dbReference type="HAMAP-Rule" id="MF_00503"/>
    </source>
</evidence>
<evidence type="ECO:0000305" key="2"/>
<organism>
    <name type="scientific">Bacillus mycoides (strain KBAB4)</name>
    <name type="common">Bacillus weihenstephanensis</name>
    <dbReference type="NCBI Taxonomy" id="315730"/>
    <lineage>
        <taxon>Bacteria</taxon>
        <taxon>Bacillati</taxon>
        <taxon>Bacillota</taxon>
        <taxon>Bacilli</taxon>
        <taxon>Bacillales</taxon>
        <taxon>Bacillaceae</taxon>
        <taxon>Bacillus</taxon>
        <taxon>Bacillus cereus group</taxon>
    </lineage>
</organism>
<feature type="chain" id="PRO_1000126868" description="Large ribosomal subunit protein bL9">
    <location>
        <begin position="1"/>
        <end position="148"/>
    </location>
</feature>
<protein>
    <recommendedName>
        <fullName evidence="1">Large ribosomal subunit protein bL9</fullName>
    </recommendedName>
    <alternativeName>
        <fullName evidence="2">50S ribosomal protein L9</fullName>
    </alternativeName>
</protein>
<proteinExistence type="inferred from homology"/>